<name>SYR_ECO8A</name>
<feature type="chain" id="PRO_1000198907" description="Arginine--tRNA ligase">
    <location>
        <begin position="1"/>
        <end position="577"/>
    </location>
</feature>
<feature type="short sequence motif" description="'HIGH' region">
    <location>
        <begin position="122"/>
        <end position="132"/>
    </location>
</feature>
<reference key="1">
    <citation type="journal article" date="2009" name="PLoS Genet.">
        <title>Organised genome dynamics in the Escherichia coli species results in highly diverse adaptive paths.</title>
        <authorList>
            <person name="Touchon M."/>
            <person name="Hoede C."/>
            <person name="Tenaillon O."/>
            <person name="Barbe V."/>
            <person name="Baeriswyl S."/>
            <person name="Bidet P."/>
            <person name="Bingen E."/>
            <person name="Bonacorsi S."/>
            <person name="Bouchier C."/>
            <person name="Bouvet O."/>
            <person name="Calteau A."/>
            <person name="Chiapello H."/>
            <person name="Clermont O."/>
            <person name="Cruveiller S."/>
            <person name="Danchin A."/>
            <person name="Diard M."/>
            <person name="Dossat C."/>
            <person name="Karoui M.E."/>
            <person name="Frapy E."/>
            <person name="Garry L."/>
            <person name="Ghigo J.M."/>
            <person name="Gilles A.M."/>
            <person name="Johnson J."/>
            <person name="Le Bouguenec C."/>
            <person name="Lescat M."/>
            <person name="Mangenot S."/>
            <person name="Martinez-Jehanne V."/>
            <person name="Matic I."/>
            <person name="Nassif X."/>
            <person name="Oztas S."/>
            <person name="Petit M.A."/>
            <person name="Pichon C."/>
            <person name="Rouy Z."/>
            <person name="Ruf C.S."/>
            <person name="Schneider D."/>
            <person name="Tourret J."/>
            <person name="Vacherie B."/>
            <person name="Vallenet D."/>
            <person name="Medigue C."/>
            <person name="Rocha E.P.C."/>
            <person name="Denamur E."/>
        </authorList>
    </citation>
    <scope>NUCLEOTIDE SEQUENCE [LARGE SCALE GENOMIC DNA]</scope>
    <source>
        <strain>IAI1</strain>
    </source>
</reference>
<accession>B7M2G7</accession>
<evidence type="ECO:0000255" key="1">
    <source>
        <dbReference type="HAMAP-Rule" id="MF_00123"/>
    </source>
</evidence>
<dbReference type="EC" id="6.1.1.19" evidence="1"/>
<dbReference type="EMBL" id="CU928160">
    <property type="protein sequence ID" value="CAQ98816.1"/>
    <property type="molecule type" value="Genomic_DNA"/>
</dbReference>
<dbReference type="RefSeq" id="WP_001025342.1">
    <property type="nucleotide sequence ID" value="NC_011741.1"/>
</dbReference>
<dbReference type="SMR" id="B7M2G7"/>
<dbReference type="KEGG" id="ecr:ECIAI1_1963"/>
<dbReference type="HOGENOM" id="CLU_006406_5_1_6"/>
<dbReference type="GO" id="GO:0005737">
    <property type="term" value="C:cytoplasm"/>
    <property type="evidence" value="ECO:0007669"/>
    <property type="project" value="UniProtKB-SubCell"/>
</dbReference>
<dbReference type="GO" id="GO:0004814">
    <property type="term" value="F:arginine-tRNA ligase activity"/>
    <property type="evidence" value="ECO:0007669"/>
    <property type="project" value="UniProtKB-UniRule"/>
</dbReference>
<dbReference type="GO" id="GO:0005524">
    <property type="term" value="F:ATP binding"/>
    <property type="evidence" value="ECO:0007669"/>
    <property type="project" value="UniProtKB-UniRule"/>
</dbReference>
<dbReference type="GO" id="GO:0006420">
    <property type="term" value="P:arginyl-tRNA aminoacylation"/>
    <property type="evidence" value="ECO:0007669"/>
    <property type="project" value="UniProtKB-UniRule"/>
</dbReference>
<dbReference type="CDD" id="cd07956">
    <property type="entry name" value="Anticodon_Ia_Arg"/>
    <property type="match status" value="1"/>
</dbReference>
<dbReference type="CDD" id="cd00671">
    <property type="entry name" value="ArgRS_core"/>
    <property type="match status" value="1"/>
</dbReference>
<dbReference type="FunFam" id="1.10.730.10:FF:000001">
    <property type="entry name" value="Arginine--tRNA ligase"/>
    <property type="match status" value="1"/>
</dbReference>
<dbReference type="FunFam" id="3.30.1360.70:FF:000001">
    <property type="entry name" value="Arginine--tRNA ligase"/>
    <property type="match status" value="1"/>
</dbReference>
<dbReference type="FunFam" id="3.40.50.620:FF:000030">
    <property type="entry name" value="Arginine--tRNA ligase"/>
    <property type="match status" value="1"/>
</dbReference>
<dbReference type="Gene3D" id="3.30.1360.70">
    <property type="entry name" value="Arginyl tRNA synthetase N-terminal domain"/>
    <property type="match status" value="1"/>
</dbReference>
<dbReference type="Gene3D" id="3.40.50.620">
    <property type="entry name" value="HUPs"/>
    <property type="match status" value="1"/>
</dbReference>
<dbReference type="Gene3D" id="1.10.730.10">
    <property type="entry name" value="Isoleucyl-tRNA Synthetase, Domain 1"/>
    <property type="match status" value="1"/>
</dbReference>
<dbReference type="HAMAP" id="MF_00123">
    <property type="entry name" value="Arg_tRNA_synth"/>
    <property type="match status" value="1"/>
</dbReference>
<dbReference type="InterPro" id="IPR001412">
    <property type="entry name" value="aa-tRNA-synth_I_CS"/>
</dbReference>
<dbReference type="InterPro" id="IPR001278">
    <property type="entry name" value="Arg-tRNA-ligase"/>
</dbReference>
<dbReference type="InterPro" id="IPR005148">
    <property type="entry name" value="Arg-tRNA-synth_N"/>
</dbReference>
<dbReference type="InterPro" id="IPR036695">
    <property type="entry name" value="Arg-tRNA-synth_N_sf"/>
</dbReference>
<dbReference type="InterPro" id="IPR035684">
    <property type="entry name" value="ArgRS_core"/>
</dbReference>
<dbReference type="InterPro" id="IPR008909">
    <property type="entry name" value="DALR_anticod-bd"/>
</dbReference>
<dbReference type="InterPro" id="IPR014729">
    <property type="entry name" value="Rossmann-like_a/b/a_fold"/>
</dbReference>
<dbReference type="InterPro" id="IPR009080">
    <property type="entry name" value="tRNAsynth_Ia_anticodon-bd"/>
</dbReference>
<dbReference type="NCBIfam" id="TIGR00456">
    <property type="entry name" value="argS"/>
    <property type="match status" value="1"/>
</dbReference>
<dbReference type="PANTHER" id="PTHR11956:SF5">
    <property type="entry name" value="ARGININE--TRNA LIGASE, CYTOPLASMIC"/>
    <property type="match status" value="1"/>
</dbReference>
<dbReference type="PANTHER" id="PTHR11956">
    <property type="entry name" value="ARGINYL-TRNA SYNTHETASE"/>
    <property type="match status" value="1"/>
</dbReference>
<dbReference type="Pfam" id="PF03485">
    <property type="entry name" value="Arg_tRNA_synt_N"/>
    <property type="match status" value="1"/>
</dbReference>
<dbReference type="Pfam" id="PF05746">
    <property type="entry name" value="DALR_1"/>
    <property type="match status" value="1"/>
</dbReference>
<dbReference type="Pfam" id="PF00750">
    <property type="entry name" value="tRNA-synt_1d"/>
    <property type="match status" value="1"/>
</dbReference>
<dbReference type="PRINTS" id="PR01038">
    <property type="entry name" value="TRNASYNTHARG"/>
</dbReference>
<dbReference type="SMART" id="SM01016">
    <property type="entry name" value="Arg_tRNA_synt_N"/>
    <property type="match status" value="1"/>
</dbReference>
<dbReference type="SMART" id="SM00836">
    <property type="entry name" value="DALR_1"/>
    <property type="match status" value="1"/>
</dbReference>
<dbReference type="SUPFAM" id="SSF47323">
    <property type="entry name" value="Anticodon-binding domain of a subclass of class I aminoacyl-tRNA synthetases"/>
    <property type="match status" value="1"/>
</dbReference>
<dbReference type="SUPFAM" id="SSF55190">
    <property type="entry name" value="Arginyl-tRNA synthetase (ArgRS), N-terminal 'additional' domain"/>
    <property type="match status" value="1"/>
</dbReference>
<dbReference type="SUPFAM" id="SSF52374">
    <property type="entry name" value="Nucleotidylyl transferase"/>
    <property type="match status" value="1"/>
</dbReference>
<dbReference type="PROSITE" id="PS00178">
    <property type="entry name" value="AA_TRNA_LIGASE_I"/>
    <property type="match status" value="1"/>
</dbReference>
<gene>
    <name evidence="1" type="primary">argS</name>
    <name type="ordered locus">ECIAI1_1963</name>
</gene>
<organism>
    <name type="scientific">Escherichia coli O8 (strain IAI1)</name>
    <dbReference type="NCBI Taxonomy" id="585034"/>
    <lineage>
        <taxon>Bacteria</taxon>
        <taxon>Pseudomonadati</taxon>
        <taxon>Pseudomonadota</taxon>
        <taxon>Gammaproteobacteria</taxon>
        <taxon>Enterobacterales</taxon>
        <taxon>Enterobacteriaceae</taxon>
        <taxon>Escherichia</taxon>
    </lineage>
</organism>
<proteinExistence type="inferred from homology"/>
<sequence length="577" mass="64698">MNIQALLSEKVRQAMIAAGAPADCEPQVRQSAKVQFGDYQANGMMAVAKKLGMAPRQLAEQVLTHLDLNGIASKVEIAGPGFINIFLDPAFLAEHVQQALASDRLGVSTPEKQTIVVDYSAPNVAKEMHVGHLRSTIIGDAAVRTLEFLGHKVIRANHVGDWGTQFGMLIAWLEKQQQENAGEMELADLEGFYRDAKKHYDEDEEFAERARNYVVKLQSGDEYFREMWRKLVDITMTQNQITYDRLNVTLTRDDVMGESLYNPMLPGIVADLKAKGLAVESEGATVVFLDEFKNKEGEPMGVIIQKKDGGYLYTTTDIACAKYRYETLHADRVLYYIDSRQHQHLMQAWAIVRKAGYVPESVPLEHHMFGMMLGKDGKPFKTRAGGTVKLADLLDEALERARRLVAEKNPDMPADELEKLANAVGIGAVKYADLSKNRTTDYIFDWDNMLAFEGNTAPYMQYAYTRVLSVFRKAEINEEQLAAAPVIIREDREAQLAARLLQFEETLTVVAREGTPHVMCAYLYDLAGLFSGFYEHCPILSAENEEVRNSRLKLAQLTAKTLKLGLDTLGIETVERM</sequence>
<protein>
    <recommendedName>
        <fullName evidence="1">Arginine--tRNA ligase</fullName>
        <ecNumber evidence="1">6.1.1.19</ecNumber>
    </recommendedName>
    <alternativeName>
        <fullName evidence="1">Arginyl-tRNA synthetase</fullName>
        <shortName evidence="1">ArgRS</shortName>
    </alternativeName>
</protein>
<comment type="catalytic activity">
    <reaction evidence="1">
        <text>tRNA(Arg) + L-arginine + ATP = L-arginyl-tRNA(Arg) + AMP + diphosphate</text>
        <dbReference type="Rhea" id="RHEA:20301"/>
        <dbReference type="Rhea" id="RHEA-COMP:9658"/>
        <dbReference type="Rhea" id="RHEA-COMP:9673"/>
        <dbReference type="ChEBI" id="CHEBI:30616"/>
        <dbReference type="ChEBI" id="CHEBI:32682"/>
        <dbReference type="ChEBI" id="CHEBI:33019"/>
        <dbReference type="ChEBI" id="CHEBI:78442"/>
        <dbReference type="ChEBI" id="CHEBI:78513"/>
        <dbReference type="ChEBI" id="CHEBI:456215"/>
        <dbReference type="EC" id="6.1.1.19"/>
    </reaction>
</comment>
<comment type="subunit">
    <text evidence="1">Monomer.</text>
</comment>
<comment type="subcellular location">
    <subcellularLocation>
        <location evidence="1">Cytoplasm</location>
    </subcellularLocation>
</comment>
<comment type="similarity">
    <text evidence="1">Belongs to the class-I aminoacyl-tRNA synthetase family.</text>
</comment>
<keyword id="KW-0030">Aminoacyl-tRNA synthetase</keyword>
<keyword id="KW-0067">ATP-binding</keyword>
<keyword id="KW-0963">Cytoplasm</keyword>
<keyword id="KW-0436">Ligase</keyword>
<keyword id="KW-0547">Nucleotide-binding</keyword>
<keyword id="KW-0648">Protein biosynthesis</keyword>